<gene>
    <name evidence="17 23" type="primary">ABCB8</name>
    <name evidence="19" type="synonym">MABC1</name>
    <name evidence="18" type="synonym">MITOSUR</name>
</gene>
<feature type="transit peptide" description="Mitochondrion" evidence="2">
    <location>
        <begin position="1"/>
        <end position="25"/>
    </location>
</feature>
<feature type="chain" id="PRO_0000000251" description="Mitochondrial potassium channel ATP-binding subunit" evidence="2">
    <location>
        <begin position="26"/>
        <end position="735"/>
    </location>
</feature>
<feature type="topological domain" description="Mitochondrial matrix" evidence="22">
    <location>
        <begin position="26"/>
        <end position="144"/>
    </location>
</feature>
<feature type="transmembrane region" description="Helical" evidence="2 4">
    <location>
        <begin position="145"/>
        <end position="165"/>
    </location>
</feature>
<feature type="topological domain" description="Mitochondrial intermembrane" evidence="22">
    <location>
        <begin position="166"/>
        <end position="195"/>
    </location>
</feature>
<feature type="transmembrane region" description="Helical" evidence="2 4">
    <location>
        <begin position="196"/>
        <end position="216"/>
    </location>
</feature>
<feature type="topological domain" description="Mitochondrial matrix" evidence="22">
    <location>
        <begin position="217"/>
        <end position="295"/>
    </location>
</feature>
<feature type="transmembrane region" description="Helical" evidence="2 4">
    <location>
        <begin position="296"/>
        <end position="316"/>
    </location>
</feature>
<feature type="topological domain" description="Mitochondrial intermembrane" evidence="22">
    <location>
        <begin position="317"/>
        <end position="735"/>
    </location>
</feature>
<feature type="domain" description="ABC transmembrane type-1" evidence="4">
    <location>
        <begin position="150"/>
        <end position="437"/>
    </location>
</feature>
<feature type="domain" description="ABC transporter" evidence="3">
    <location>
        <begin position="472"/>
        <end position="709"/>
    </location>
</feature>
<feature type="region of interest" description="Disordered" evidence="5">
    <location>
        <begin position="712"/>
        <end position="735"/>
    </location>
</feature>
<feature type="binding site" evidence="3 14 24">
    <location>
        <begin position="507"/>
        <end position="514"/>
    </location>
    <ligand>
        <name>ATP</name>
        <dbReference type="ChEBI" id="CHEBI:30616"/>
    </ligand>
</feature>
<feature type="splice variant" id="VSP_056744" description="In isoform 5." evidence="15">
    <location>
        <begin position="1"/>
        <end position="187"/>
    </location>
</feature>
<feature type="splice variant" id="VSP_056745" description="In isoform 4." evidence="15">
    <original>MLVHLFRVGIRGGPFPGRLLPPLRFQTFSAVRNTWRNGKTGQLHKAEGEYSDGYRSSSLLRAVAHLRSQLWAHLPRAPLAPRWSPSAWCWVGGALLGPMVLSKHPHLCLVALCEAEEAPPASSTPHVVGSRFNWKLFWQFLHPHLLVLGVAVV</original>
    <variation>MRVKLLLPAAPVLPRQHAGAFISGRDSGWPIPRQAATAPPLPDILSCQ</variation>
    <location>
        <begin position="1"/>
        <end position="153"/>
    </location>
</feature>
<feature type="splice variant" id="VSP_000026" description="In isoform 2 and isoform 3." evidence="15 16 19 20">
    <location>
        <begin position="33"/>
        <end position="49"/>
    </location>
</feature>
<feature type="splice variant" id="VSP_055297" description="In isoform 3." evidence="16">
    <location>
        <begin position="665"/>
        <end position="689"/>
    </location>
</feature>
<feature type="sequence variant" id="VAR_013331" description="In dbSNP:rs4148844." evidence="6">
    <original>V</original>
    <variation>I</variation>
    <location>
        <position position="152"/>
    </location>
</feature>
<feature type="sequence variant" id="VAR_035733" description="In a breast cancer sample; somatic mutation." evidence="8">
    <original>I</original>
    <variation>T</variation>
    <location>
        <position position="165"/>
    </location>
</feature>
<feature type="sequence variant" id="VAR_035734" description="In a breast cancer sample; somatic mutation." evidence="8">
    <original>A</original>
    <variation>G</variation>
    <location>
        <position position="690"/>
    </location>
</feature>
<feature type="mutagenesis site" description="Renders the protein unstable." evidence="13">
    <original>GK</original>
    <variation>AR</variation>
    <location>
        <begin position="512"/>
        <end position="513"/>
    </location>
</feature>
<feature type="mutagenesis site" description="Abolish binding to ATP." evidence="12">
    <original>K</original>
    <variation>A</variation>
    <location>
        <position position="513"/>
    </location>
</feature>
<feature type="sequence conflict" description="In Ref. 1; AAD15748." evidence="21" ref="1">
    <original>E</original>
    <variation>K</variation>
    <location>
        <position position="174"/>
    </location>
</feature>
<feature type="sequence conflict" description="In Ref. 1; AAD15748." evidence="21" ref="1">
    <original>D</original>
    <variation>N</variation>
    <location>
        <position position="239"/>
    </location>
</feature>
<feature type="sequence conflict" description="In Ref. 1; AAD15748." evidence="21" ref="1">
    <original>T</original>
    <variation>S</variation>
    <location>
        <position position="278"/>
    </location>
</feature>
<feature type="sequence conflict" description="In Ref. 2; BAG57613." evidence="21" ref="2">
    <original>M</original>
    <variation>T</variation>
    <location>
        <position position="299"/>
    </location>
</feature>
<feature type="sequence conflict" description="In Ref. 1; AAD15748." evidence="21" ref="1">
    <original>Q</original>
    <variation>H</variation>
    <location>
        <position position="326"/>
    </location>
</feature>
<feature type="sequence conflict" description="In Ref. 1; AAD15748." evidence="21" ref="1">
    <original>F</original>
    <variation>L</variation>
    <location>
        <position position="347"/>
    </location>
</feature>
<feature type="sequence conflict" description="In Ref. 2; BAA92038." evidence="21" ref="2">
    <original>R</original>
    <variation>H</variation>
    <location>
        <position position="365"/>
    </location>
</feature>
<feature type="sequence conflict" description="In Ref. 2; BAG57613." evidence="21" ref="2">
    <original>F</original>
    <variation>Y</variation>
    <location>
        <position position="487"/>
    </location>
</feature>
<feature type="turn" evidence="25">
    <location>
        <begin position="133"/>
        <end position="136"/>
    </location>
</feature>
<feature type="helix" evidence="25">
    <location>
        <begin position="137"/>
        <end position="141"/>
    </location>
</feature>
<feature type="turn" evidence="25">
    <location>
        <begin position="142"/>
        <end position="144"/>
    </location>
</feature>
<feature type="helix" evidence="25">
    <location>
        <begin position="145"/>
        <end position="171"/>
    </location>
</feature>
<feature type="helix" evidence="25">
    <location>
        <begin position="174"/>
        <end position="177"/>
    </location>
</feature>
<feature type="helix" evidence="25">
    <location>
        <begin position="190"/>
        <end position="237"/>
    </location>
</feature>
<feature type="helix" evidence="25">
    <location>
        <begin position="240"/>
        <end position="245"/>
    </location>
</feature>
<feature type="helix" evidence="25">
    <location>
        <begin position="248"/>
        <end position="279"/>
    </location>
</feature>
<feature type="helix" evidence="25">
    <location>
        <begin position="281"/>
        <end position="287"/>
    </location>
</feature>
<feature type="helix" evidence="25">
    <location>
        <begin position="291"/>
        <end position="309"/>
    </location>
</feature>
<feature type="turn" evidence="25">
    <location>
        <begin position="311"/>
        <end position="313"/>
    </location>
</feature>
<feature type="helix" evidence="25">
    <location>
        <begin position="316"/>
        <end position="339"/>
    </location>
</feature>
<feature type="helix" evidence="25">
    <location>
        <begin position="341"/>
        <end position="346"/>
    </location>
</feature>
<feature type="helix" evidence="25">
    <location>
        <begin position="350"/>
        <end position="395"/>
    </location>
</feature>
<feature type="helix" evidence="25">
    <location>
        <begin position="398"/>
        <end position="401"/>
    </location>
</feature>
<feature type="turn" evidence="25">
    <location>
        <begin position="402"/>
        <end position="404"/>
    </location>
</feature>
<feature type="helix" evidence="25">
    <location>
        <begin position="408"/>
        <end position="430"/>
    </location>
</feature>
<feature type="helix" evidence="25">
    <location>
        <begin position="432"/>
        <end position="449"/>
    </location>
</feature>
<feature type="turn" evidence="25">
    <location>
        <begin position="465"/>
        <end position="467"/>
    </location>
</feature>
<feature type="strand" evidence="25">
    <location>
        <begin position="472"/>
        <end position="480"/>
    </location>
</feature>
<feature type="strand" evidence="25">
    <location>
        <begin position="482"/>
        <end position="497"/>
    </location>
</feature>
<feature type="strand" evidence="25">
    <location>
        <begin position="502"/>
        <end position="507"/>
    </location>
</feature>
<feature type="helix" evidence="25">
    <location>
        <begin position="513"/>
        <end position="520"/>
    </location>
</feature>
<feature type="strand" evidence="25">
    <location>
        <begin position="527"/>
        <end position="533"/>
    </location>
</feature>
<feature type="turn" evidence="25">
    <location>
        <begin position="538"/>
        <end position="540"/>
    </location>
</feature>
<feature type="helix" evidence="25">
    <location>
        <begin position="543"/>
        <end position="549"/>
    </location>
</feature>
<feature type="strand" evidence="25">
    <location>
        <begin position="551"/>
        <end position="554"/>
    </location>
</feature>
<feature type="strand" evidence="25">
    <location>
        <begin position="562"/>
        <end position="564"/>
    </location>
</feature>
<feature type="helix" evidence="25">
    <location>
        <begin position="565"/>
        <end position="569"/>
    </location>
</feature>
<feature type="helix" evidence="25">
    <location>
        <begin position="578"/>
        <end position="587"/>
    </location>
</feature>
<feature type="helix" evidence="25">
    <location>
        <begin position="591"/>
        <end position="594"/>
    </location>
</feature>
<feature type="strand" evidence="25">
    <location>
        <begin position="597"/>
        <end position="599"/>
    </location>
</feature>
<feature type="helix" evidence="25">
    <location>
        <begin position="600"/>
        <end position="602"/>
    </location>
</feature>
<feature type="strand" evidence="25">
    <location>
        <begin position="604"/>
        <end position="610"/>
    </location>
</feature>
<feature type="helix" evidence="25">
    <location>
        <begin position="614"/>
        <end position="626"/>
    </location>
</feature>
<feature type="strand" evidence="25">
    <location>
        <begin position="631"/>
        <end position="637"/>
    </location>
</feature>
<feature type="helix" evidence="25">
    <location>
        <begin position="644"/>
        <end position="657"/>
    </location>
</feature>
<feature type="turn" evidence="25">
    <location>
        <begin position="658"/>
        <end position="660"/>
    </location>
</feature>
<feature type="strand" evidence="25">
    <location>
        <begin position="661"/>
        <end position="666"/>
    </location>
</feature>
<feature type="turn" evidence="25">
    <location>
        <begin position="670"/>
        <end position="672"/>
    </location>
</feature>
<feature type="helix" evidence="25">
    <location>
        <begin position="673"/>
        <end position="675"/>
    </location>
</feature>
<feature type="strand" evidence="25">
    <location>
        <begin position="676"/>
        <end position="683"/>
    </location>
</feature>
<feature type="strand" evidence="25">
    <location>
        <begin position="686"/>
        <end position="691"/>
    </location>
</feature>
<feature type="helix" evidence="25">
    <location>
        <begin position="693"/>
        <end position="698"/>
    </location>
</feature>
<feature type="helix" evidence="25">
    <location>
        <begin position="702"/>
        <end position="714"/>
    </location>
</feature>
<accession>Q9NUT2</accession>
<accession>A5D8W3</accession>
<accession>B2RBL8</accession>
<accession>B3KND2</accession>
<accession>B4DG02</accession>
<accession>G3XAP3</accession>
<accession>O95787</accession>
<accession>Q53GM0</accession>
<reference key="1">
    <citation type="journal article" date="1999" name="J. Mol. Biol.">
        <title>Identification and characterization of a mammalian mitochondrial ATP-binding cassette membrane protein.</title>
        <authorList>
            <person name="Hogue D.L."/>
            <person name="Liu L."/>
            <person name="Ling V."/>
        </authorList>
    </citation>
    <scope>NUCLEOTIDE SEQUENCE [MRNA] (ISOFORM 2)</scope>
    <scope>MUTAGENESIS</scope>
</reference>
<reference key="2">
    <citation type="journal article" date="2004" name="Nat. Genet.">
        <title>Complete sequencing and characterization of 21,243 full-length human cDNAs.</title>
        <authorList>
            <person name="Ota T."/>
            <person name="Suzuki Y."/>
            <person name="Nishikawa T."/>
            <person name="Otsuki T."/>
            <person name="Sugiyama T."/>
            <person name="Irie R."/>
            <person name="Wakamatsu A."/>
            <person name="Hayashi K."/>
            <person name="Sato H."/>
            <person name="Nagai K."/>
            <person name="Kimura K."/>
            <person name="Makita H."/>
            <person name="Sekine M."/>
            <person name="Obayashi M."/>
            <person name="Nishi T."/>
            <person name="Shibahara T."/>
            <person name="Tanaka T."/>
            <person name="Ishii S."/>
            <person name="Yamamoto J."/>
            <person name="Saito K."/>
            <person name="Kawai Y."/>
            <person name="Isono Y."/>
            <person name="Nakamura Y."/>
            <person name="Nagahari K."/>
            <person name="Murakami K."/>
            <person name="Yasuda T."/>
            <person name="Iwayanagi T."/>
            <person name="Wagatsuma M."/>
            <person name="Shiratori A."/>
            <person name="Sudo H."/>
            <person name="Hosoiri T."/>
            <person name="Kaku Y."/>
            <person name="Kodaira H."/>
            <person name="Kondo H."/>
            <person name="Sugawara M."/>
            <person name="Takahashi M."/>
            <person name="Kanda K."/>
            <person name="Yokoi T."/>
            <person name="Furuya T."/>
            <person name="Kikkawa E."/>
            <person name="Omura Y."/>
            <person name="Abe K."/>
            <person name="Kamihara K."/>
            <person name="Katsuta N."/>
            <person name="Sato K."/>
            <person name="Tanikawa M."/>
            <person name="Yamazaki M."/>
            <person name="Ninomiya K."/>
            <person name="Ishibashi T."/>
            <person name="Yamashita H."/>
            <person name="Murakawa K."/>
            <person name="Fujimori K."/>
            <person name="Tanai H."/>
            <person name="Kimata M."/>
            <person name="Watanabe M."/>
            <person name="Hiraoka S."/>
            <person name="Chiba Y."/>
            <person name="Ishida S."/>
            <person name="Ono Y."/>
            <person name="Takiguchi S."/>
            <person name="Watanabe S."/>
            <person name="Yosida M."/>
            <person name="Hotuta T."/>
            <person name="Kusano J."/>
            <person name="Kanehori K."/>
            <person name="Takahashi-Fujii A."/>
            <person name="Hara H."/>
            <person name="Tanase T.-O."/>
            <person name="Nomura Y."/>
            <person name="Togiya S."/>
            <person name="Komai F."/>
            <person name="Hara R."/>
            <person name="Takeuchi K."/>
            <person name="Arita M."/>
            <person name="Imose N."/>
            <person name="Musashino K."/>
            <person name="Yuuki H."/>
            <person name="Oshima A."/>
            <person name="Sasaki N."/>
            <person name="Aotsuka S."/>
            <person name="Yoshikawa Y."/>
            <person name="Matsunawa H."/>
            <person name="Ichihara T."/>
            <person name="Shiohata N."/>
            <person name="Sano S."/>
            <person name="Moriya S."/>
            <person name="Momiyama H."/>
            <person name="Satoh N."/>
            <person name="Takami S."/>
            <person name="Terashima Y."/>
            <person name="Suzuki O."/>
            <person name="Nakagawa S."/>
            <person name="Senoh A."/>
            <person name="Mizoguchi H."/>
            <person name="Goto Y."/>
            <person name="Shimizu F."/>
            <person name="Wakebe H."/>
            <person name="Hishigaki H."/>
            <person name="Watanabe T."/>
            <person name="Sugiyama A."/>
            <person name="Takemoto M."/>
            <person name="Kawakami B."/>
            <person name="Yamazaki M."/>
            <person name="Watanabe K."/>
            <person name="Kumagai A."/>
            <person name="Itakura S."/>
            <person name="Fukuzumi Y."/>
            <person name="Fujimori Y."/>
            <person name="Komiyama M."/>
            <person name="Tashiro H."/>
            <person name="Tanigami A."/>
            <person name="Fujiwara T."/>
            <person name="Ono T."/>
            <person name="Yamada K."/>
            <person name="Fujii Y."/>
            <person name="Ozaki K."/>
            <person name="Hirao M."/>
            <person name="Ohmori Y."/>
            <person name="Kawabata A."/>
            <person name="Hikiji T."/>
            <person name="Kobatake N."/>
            <person name="Inagaki H."/>
            <person name="Ikema Y."/>
            <person name="Okamoto S."/>
            <person name="Okitani R."/>
            <person name="Kawakami T."/>
            <person name="Noguchi S."/>
            <person name="Itoh T."/>
            <person name="Shigeta K."/>
            <person name="Senba T."/>
            <person name="Matsumura K."/>
            <person name="Nakajima Y."/>
            <person name="Mizuno T."/>
            <person name="Morinaga M."/>
            <person name="Sasaki M."/>
            <person name="Togashi T."/>
            <person name="Oyama M."/>
            <person name="Hata H."/>
            <person name="Watanabe M."/>
            <person name="Komatsu T."/>
            <person name="Mizushima-Sugano J."/>
            <person name="Satoh T."/>
            <person name="Shirai Y."/>
            <person name="Takahashi Y."/>
            <person name="Nakagawa K."/>
            <person name="Okumura K."/>
            <person name="Nagase T."/>
            <person name="Nomura N."/>
            <person name="Kikuchi H."/>
            <person name="Masuho Y."/>
            <person name="Yamashita R."/>
            <person name="Nakai K."/>
            <person name="Yada T."/>
            <person name="Nakamura Y."/>
            <person name="Ohara O."/>
            <person name="Isogai T."/>
            <person name="Sugano S."/>
        </authorList>
    </citation>
    <scope>NUCLEOTIDE SEQUENCE [LARGE SCALE MRNA] (ISOFORMS 1; 2; 4 AND 5)</scope>
    <source>
        <tissue>Amygdala</tissue>
        <tissue>Placenta</tissue>
        <tissue>Tongue</tissue>
    </source>
</reference>
<reference key="3">
    <citation type="submission" date="2005-04" db="EMBL/GenBank/DDBJ databases">
        <authorList>
            <person name="Suzuki Y."/>
            <person name="Sugano S."/>
            <person name="Totoki Y."/>
            <person name="Toyoda A."/>
            <person name="Takeda T."/>
            <person name="Sakaki Y."/>
            <person name="Tanaka A."/>
            <person name="Yokoyama S."/>
        </authorList>
    </citation>
    <scope>NUCLEOTIDE SEQUENCE [LARGE SCALE MRNA] (ISOFORM 2)</scope>
    <source>
        <tissue>Kidney</tissue>
    </source>
</reference>
<reference key="4">
    <citation type="journal article" date="2003" name="Nature">
        <title>The DNA sequence of human chromosome 7.</title>
        <authorList>
            <person name="Hillier L.W."/>
            <person name="Fulton R.S."/>
            <person name="Fulton L.A."/>
            <person name="Graves T.A."/>
            <person name="Pepin K.H."/>
            <person name="Wagner-McPherson C."/>
            <person name="Layman D."/>
            <person name="Maas J."/>
            <person name="Jaeger S."/>
            <person name="Walker R."/>
            <person name="Wylie K."/>
            <person name="Sekhon M."/>
            <person name="Becker M.C."/>
            <person name="O'Laughlin M.D."/>
            <person name="Schaller M.E."/>
            <person name="Fewell G.A."/>
            <person name="Delehaunty K.D."/>
            <person name="Miner T.L."/>
            <person name="Nash W.E."/>
            <person name="Cordes M."/>
            <person name="Du H."/>
            <person name="Sun H."/>
            <person name="Edwards J."/>
            <person name="Bradshaw-Cordum H."/>
            <person name="Ali J."/>
            <person name="Andrews S."/>
            <person name="Isak A."/>
            <person name="Vanbrunt A."/>
            <person name="Nguyen C."/>
            <person name="Du F."/>
            <person name="Lamar B."/>
            <person name="Courtney L."/>
            <person name="Kalicki J."/>
            <person name="Ozersky P."/>
            <person name="Bielicki L."/>
            <person name="Scott K."/>
            <person name="Holmes A."/>
            <person name="Harkins R."/>
            <person name="Harris A."/>
            <person name="Strong C.M."/>
            <person name="Hou S."/>
            <person name="Tomlinson C."/>
            <person name="Dauphin-Kohlberg S."/>
            <person name="Kozlowicz-Reilly A."/>
            <person name="Leonard S."/>
            <person name="Rohlfing T."/>
            <person name="Rock S.M."/>
            <person name="Tin-Wollam A.-M."/>
            <person name="Abbott A."/>
            <person name="Minx P."/>
            <person name="Maupin R."/>
            <person name="Strowmatt C."/>
            <person name="Latreille P."/>
            <person name="Miller N."/>
            <person name="Johnson D."/>
            <person name="Murray J."/>
            <person name="Woessner J.P."/>
            <person name="Wendl M.C."/>
            <person name="Yang S.-P."/>
            <person name="Schultz B.R."/>
            <person name="Wallis J.W."/>
            <person name="Spieth J."/>
            <person name="Bieri T.A."/>
            <person name="Nelson J.O."/>
            <person name="Berkowicz N."/>
            <person name="Wohldmann P.E."/>
            <person name="Cook L.L."/>
            <person name="Hickenbotham M.T."/>
            <person name="Eldred J."/>
            <person name="Williams D."/>
            <person name="Bedell J.A."/>
            <person name="Mardis E.R."/>
            <person name="Clifton S.W."/>
            <person name="Chissoe S.L."/>
            <person name="Marra M.A."/>
            <person name="Raymond C."/>
            <person name="Haugen E."/>
            <person name="Gillett W."/>
            <person name="Zhou Y."/>
            <person name="James R."/>
            <person name="Phelps K."/>
            <person name="Iadanoto S."/>
            <person name="Bubb K."/>
            <person name="Simms E."/>
            <person name="Levy R."/>
            <person name="Clendenning J."/>
            <person name="Kaul R."/>
            <person name="Kent W.J."/>
            <person name="Furey T.S."/>
            <person name="Baertsch R.A."/>
            <person name="Brent M.R."/>
            <person name="Keibler E."/>
            <person name="Flicek P."/>
            <person name="Bork P."/>
            <person name="Suyama M."/>
            <person name="Bailey J.A."/>
            <person name="Portnoy M.E."/>
            <person name="Torrents D."/>
            <person name="Chinwalla A.T."/>
            <person name="Gish W.R."/>
            <person name="Eddy S.R."/>
            <person name="McPherson J.D."/>
            <person name="Olson M.V."/>
            <person name="Eichler E.E."/>
            <person name="Green E.D."/>
            <person name="Waterston R.H."/>
            <person name="Wilson R.K."/>
        </authorList>
    </citation>
    <scope>NUCLEOTIDE SEQUENCE [LARGE SCALE GENOMIC DNA]</scope>
</reference>
<reference key="5">
    <citation type="submission" date="2005-09" db="EMBL/GenBank/DDBJ databases">
        <authorList>
            <person name="Mural R.J."/>
            <person name="Istrail S."/>
            <person name="Sutton G.G."/>
            <person name="Florea L."/>
            <person name="Halpern A.L."/>
            <person name="Mobarry C.M."/>
            <person name="Lippert R."/>
            <person name="Walenz B."/>
            <person name="Shatkay H."/>
            <person name="Dew I."/>
            <person name="Miller J.R."/>
            <person name="Flanigan M.J."/>
            <person name="Edwards N.J."/>
            <person name="Bolanos R."/>
            <person name="Fasulo D."/>
            <person name="Halldorsson B.V."/>
            <person name="Hannenhalli S."/>
            <person name="Turner R."/>
            <person name="Yooseph S."/>
            <person name="Lu F."/>
            <person name="Nusskern D.R."/>
            <person name="Shue B.C."/>
            <person name="Zheng X.H."/>
            <person name="Zhong F."/>
            <person name="Delcher A.L."/>
            <person name="Huson D.H."/>
            <person name="Kravitz S.A."/>
            <person name="Mouchard L."/>
            <person name="Reinert K."/>
            <person name="Remington K.A."/>
            <person name="Clark A.G."/>
            <person name="Waterman M.S."/>
            <person name="Eichler E.E."/>
            <person name="Adams M.D."/>
            <person name="Hunkapiller M.W."/>
            <person name="Myers E.W."/>
            <person name="Venter J.C."/>
        </authorList>
    </citation>
    <scope>NUCLEOTIDE SEQUENCE [LARGE SCALE GENOMIC DNA]</scope>
</reference>
<reference key="6">
    <citation type="journal article" date="2004" name="Genome Res.">
        <title>The status, quality, and expansion of the NIH full-length cDNA project: the Mammalian Gene Collection (MGC).</title>
        <authorList>
            <consortium name="The MGC Project Team"/>
        </authorList>
    </citation>
    <scope>NUCLEOTIDE SEQUENCE [LARGE SCALE MRNA] (ISOFORMS 2 AND 3)</scope>
</reference>
<reference key="7">
    <citation type="journal article" date="2005" name="Biochem. Biophys. Res. Commun.">
        <title>Targeting of the mitochondrial membrane proteins to the cell surface for functional studies.</title>
        <authorList>
            <person name="Ardehali H."/>
            <person name="Xue T."/>
            <person name="Dong P."/>
            <person name="Machamer C."/>
        </authorList>
    </citation>
    <scope>SUBCELLULAR LOCATION</scope>
    <scope>TRANSIT PEPTIDE CLEAVAGE SITE</scope>
</reference>
<reference key="8">
    <citation type="journal article" date="2015" name="Proteomics">
        <title>N-terminome analysis of the human mitochondrial proteome.</title>
        <authorList>
            <person name="Vaca Jacome A.S."/>
            <person name="Rabilloud T."/>
            <person name="Schaeffer-Reiss C."/>
            <person name="Rompais M."/>
            <person name="Ayoub D."/>
            <person name="Lane L."/>
            <person name="Bairoch A."/>
            <person name="Van Dorsselaer A."/>
            <person name="Carapito C."/>
        </authorList>
    </citation>
    <scope>IDENTIFICATION BY MASS SPECTROMETRY [LARGE SCALE ANALYSIS]</scope>
</reference>
<reference key="9">
    <citation type="journal article" date="2002" name="J. Hum. Genet.">
        <title>Three hundred twenty-six genetic variations in genes encoding nine members of ATP-binding cassette, subfamily B (ABCB/MDR/TAP), in the Japanese population.</title>
        <authorList>
            <person name="Saito S."/>
            <person name="Iida A."/>
            <person name="Sekine A."/>
            <person name="Miura Y."/>
            <person name="Ogawa C."/>
            <person name="Kawauchi S."/>
            <person name="Higuchi S."/>
            <person name="Nakamura Y."/>
        </authorList>
    </citation>
    <scope>VARIANT ILE-152</scope>
</reference>
<reference key="10">
    <citation type="journal article" date="2006" name="Science">
        <title>The consensus coding sequences of human breast and colorectal cancers.</title>
        <authorList>
            <person name="Sjoeblom T."/>
            <person name="Jones S."/>
            <person name="Wood L.D."/>
            <person name="Parsons D.W."/>
            <person name="Lin J."/>
            <person name="Barber T.D."/>
            <person name="Mandelker D."/>
            <person name="Leary R.J."/>
            <person name="Ptak J."/>
            <person name="Silliman N."/>
            <person name="Szabo S."/>
            <person name="Buckhaults P."/>
            <person name="Farrell C."/>
            <person name="Meeh P."/>
            <person name="Markowitz S.D."/>
            <person name="Willis J."/>
            <person name="Dawson D."/>
            <person name="Willson J.K.V."/>
            <person name="Gazdar A.F."/>
            <person name="Hartigan J."/>
            <person name="Wu L."/>
            <person name="Liu C."/>
            <person name="Parmigiani G."/>
            <person name="Park B.H."/>
            <person name="Bachman K.E."/>
            <person name="Papadopoulos N."/>
            <person name="Vogelstein B."/>
            <person name="Kinzler K.W."/>
            <person name="Velculescu V.E."/>
        </authorList>
    </citation>
    <scope>VARIANTS [LARGE SCALE ANALYSIS] THR-165 AND GLY-690</scope>
</reference>
<reference key="11">
    <citation type="journal article" date="2011" name="Mol. Genet. Genomics">
        <title>Mithramycin A suppresses expression of the human melanoma-associated gene ABCB8.</title>
        <authorList>
            <person name="Sachrajda I."/>
            <person name="Ratajewski M."/>
        </authorList>
    </citation>
    <scope>INDUCTION BY SP1</scope>
</reference>
<reference key="12">
    <citation type="journal article" date="2014" name="FASEB J.">
        <title>PAAT, a novel ATPase and trans-regulator of mitochondrial ABC transporters, is critically involved in the maintenance of mitochondrial homeostasis.</title>
        <authorList>
            <person name="Yang X."/>
            <person name="Yang J."/>
            <person name="Li L."/>
            <person name="Sun L."/>
            <person name="Yi X."/>
            <person name="Han X."/>
            <person name="Si W."/>
            <person name="Yan R."/>
            <person name="Chen Z."/>
            <person name="Xie G."/>
            <person name="Li W."/>
            <person name="Shang Y."/>
            <person name="Liang J."/>
        </authorList>
    </citation>
    <scope>INTERACTION WITH C10ORF88</scope>
</reference>
<reference key="13">
    <citation type="journal article" date="2019" name="IScience">
        <title>Neuropilin-1 Controls Endothelial Homeostasis by Regulating Mitochondrial Function and Iron-Dependent Oxidative Stress.</title>
        <authorList>
            <person name="Issitt T."/>
            <person name="Bosseboeuf E."/>
            <person name="De Winter N."/>
            <person name="Dufton N."/>
            <person name="Gestri G."/>
            <person name="Senatore V."/>
            <person name="Chikh A."/>
            <person name="Randi A.M."/>
            <person name="Raimondi C."/>
        </authorList>
    </citation>
    <scope>FUNCTION</scope>
    <scope>INTERACTION WITH NRP1</scope>
</reference>
<reference key="14">
    <citation type="journal article" date="2019" name="Nature">
        <title>Identification of an ATP-sensitive potassium channel in mitochondria.</title>
        <authorList>
            <person name="Paggio A."/>
            <person name="Checchetto V."/>
            <person name="Campo A."/>
            <person name="Menabo R."/>
            <person name="Di Marco G."/>
            <person name="Di Lisa F."/>
            <person name="Szabo I."/>
            <person name="Rizzuto R."/>
            <person name="De Stefani D."/>
        </authorList>
    </citation>
    <scope>MUTAGENESIS OF LYS-513</scope>
    <scope>FUNCTION</scope>
    <scope>SUBUNIT</scope>
    <scope>TOPOLOGY</scope>
    <scope>ACTIVITY REGULATION</scope>
    <scope>SUBCELLULAR LOCATION</scope>
</reference>
<reference evidence="24" key="15">
    <citation type="submission" date="2017-06" db="PDB data bank">
        <title>The crystal structure of human ABCB8 in an outward-facing state.</title>
        <authorList>
            <person name="Faust B."/>
            <person name="Pike A.C.W."/>
            <person name="Shintre C.A."/>
            <person name="Quiqley A.M."/>
            <person name="Chu A."/>
            <person name="Barr A."/>
            <person name="Shrestha L."/>
            <person name="Mukhopadhyay S."/>
            <person name="Borkowska O."/>
            <person name="Chalk R."/>
            <person name="Burgess-Brown N.A."/>
            <person name="Arrowsmith C.H."/>
            <person name="Edwards A.M."/>
            <person name="Bountra C."/>
            <person name="Carpenter E.P."/>
        </authorList>
    </citation>
    <scope>X-RAY CRYSTALLOGRAPHY (3.40 ANGSTROMS) OF 110-714 IN COMPLEX WITH ADP</scope>
</reference>
<sequence length="735" mass="79989">MLVHLFRVGIRGGPFPGRLLPPLRFQTFSAVRNTWRNGKTGQLHKAEGEYSDGYRSSSLLRAVAHLRSQLWAHLPRAPLAPRWSPSAWCWVGGALLGPMVLSKHPHLCLVALCEAEEAPPASSTPHVVGSRFNWKLFWQFLHPHLLVLGVAVVLALGAALVNVQIPLLLGQLVEVVAKYTRDHVGSFMTESQNLSTHLLILYGVQGLLTFGYLVLLSHVGERMAVDMRRALFSSLLRQDITFFDANKTGQLVSRLTTDVQEFKSSFKLVISQGLRSCTQVAGCLVSLSMLSTRLTLLLMVATPALMGVGTLMGSGLRKLSRQCQEQIARAMGVADEALGNVRTVRAFAMEQREEERYGAELEACRCRAEELGRGIALFQGLSNIAFNCMVLGTLFIGGSLVAGQQLTGGDLMSFLVASQTVQRSMANLSVLFGQVVRGLSAGARVFEYMALNPCIPLSGGCCVPKEQLRGSVTFQNVCFSYPCRPGFEVLKDFTLTLPPGKIVALVGQSGGGKTTVASLLERFYDPTAGVVMLDGRDLRTLDPSWLRGQVVGFISQEPVLFGTTIMENIRFGKLEASDEEVYTAAREANAHEFITSFPEGYNTVVGERGTTLSGGQKQRLAIARALIKQPTVLILDEATSALDAESERVVQEALDRASAGRTVLVIAHRLSTVRGAHCIVVMADGRVWEAGTHEELLKKGGLYAELIRRQALDAPRTAAPPPKKPEGPRSHQHKS</sequence>
<keyword id="KW-0002">3D-structure</keyword>
<keyword id="KW-0025">Alternative splicing</keyword>
<keyword id="KW-0067">ATP-binding</keyword>
<keyword id="KW-0406">Ion transport</keyword>
<keyword id="KW-0472">Membrane</keyword>
<keyword id="KW-0496">Mitochondrion</keyword>
<keyword id="KW-0999">Mitochondrion inner membrane</keyword>
<keyword id="KW-0547">Nucleotide-binding</keyword>
<keyword id="KW-0630">Potassium</keyword>
<keyword id="KW-0633">Potassium transport</keyword>
<keyword id="KW-1267">Proteomics identification</keyword>
<keyword id="KW-1185">Reference proteome</keyword>
<keyword id="KW-0809">Transit peptide</keyword>
<keyword id="KW-0812">Transmembrane</keyword>
<keyword id="KW-1133">Transmembrane helix</keyword>
<keyword id="KW-0813">Transport</keyword>
<organism>
    <name type="scientific">Homo sapiens</name>
    <name type="common">Human</name>
    <dbReference type="NCBI Taxonomy" id="9606"/>
    <lineage>
        <taxon>Eukaryota</taxon>
        <taxon>Metazoa</taxon>
        <taxon>Chordata</taxon>
        <taxon>Craniata</taxon>
        <taxon>Vertebrata</taxon>
        <taxon>Euteleostomi</taxon>
        <taxon>Mammalia</taxon>
        <taxon>Eutheria</taxon>
        <taxon>Euarchontoglires</taxon>
        <taxon>Primates</taxon>
        <taxon>Haplorrhini</taxon>
        <taxon>Catarrhini</taxon>
        <taxon>Hominidae</taxon>
        <taxon>Homo</taxon>
    </lineage>
</organism>
<comment type="function">
    <text evidence="1 11 12">ATP-binding subunit of the mitochondrial ATP-gated potassium channel (mitoK(ATP)) (PubMed:31435016). Together with pore-forming subunit CCDC51/MITOK of the mitoK(ATP) channel, mediates ATP-dependent potassium currents across the mitochondrial inner membrane (PubMed:31435016). An increase in ATP intracellular levels closes the channel, inhibiting K(+) transport, whereas a decrease in ATP levels enhances K(+) uptake in the mitochondrial matrix (PubMed:31435016). Plays a role in mitochondrial iron transport (PubMed:30623799). Required for maintenance of normal cardiac function, possibly by influencing mitochondrial iron export and regulating the maturation of cytosolic iron sulfur cluster-containing enzymes (By similarity).</text>
</comment>
<comment type="activity regulation">
    <text evidence="12">Channel activity inhibited by ATP via ABCB8/MITOSUR subunit.</text>
</comment>
<comment type="subunit">
    <text evidence="10 11 22">The mitochondrial potassium channel (mitoK(ATP)) is composed of 4 subunits of CCDC51/MITOK and 4 subunits of ABCB8/MITOSUR (Probable). Interacts with C10orf88/PAAT (PubMed:25063848). Interacts with NRP1; NRP1 regulates ABCB8/MITOSUR protein levels in mitochondria (PubMed:30623799).</text>
</comment>
<comment type="interaction">
    <interactant intactId="EBI-722515">
        <id>Q9NUT2</id>
    </interactant>
    <interactant intactId="EBI-11926384">
        <id>Q96ER9</id>
        <label>CCDC51</label>
    </interactant>
    <organismsDiffer>false</organismsDiffer>
    <experiments>2</experiments>
</comment>
<comment type="subcellular location">
    <subcellularLocation>
        <location evidence="7 12">Mitochondrion inner membrane</location>
        <topology evidence="4">Multi-pass membrane protein</topology>
    </subcellularLocation>
</comment>
<comment type="alternative products">
    <event type="alternative splicing"/>
    <isoform>
        <id>Q9NUT2-1</id>
        <name>1</name>
        <name>Long</name>
        <sequence type="displayed"/>
    </isoform>
    <isoform>
        <id>Q9NUT2-2</id>
        <name>2</name>
        <name>Short</name>
        <sequence type="described" ref="VSP_000026"/>
    </isoform>
    <isoform>
        <id>Q9NUT2-3</id>
        <name>3</name>
        <sequence type="described" ref="VSP_000026 VSP_055297"/>
    </isoform>
    <isoform>
        <id>Q9NUT2-4</id>
        <name>4</name>
        <sequence type="described" ref="VSP_056745"/>
    </isoform>
    <isoform>
        <id>Q9NUT2-5</id>
        <name>5</name>
        <sequence type="described" ref="VSP_056744"/>
    </isoform>
</comment>
<comment type="tissue specificity">
    <text>Ubiquitous.</text>
</comment>
<comment type="induction">
    <text evidence="9 21">SP1 transcription factor binds to the ABCB8 core promoter region, possibly regulating its transcription.</text>
</comment>
<comment type="similarity">
    <text evidence="21">Belongs to the ABC transporter superfamily. ABCB family. Multidrug resistance exporter (TC 3.A.1.201) subfamily.</text>
</comment>
<comment type="online information" name="ABCMdb">
    <link uri="http://abcm2.hegelab.org/search"/>
    <text>Database for mutations in ABC proteins</text>
</comment>
<proteinExistence type="evidence at protein level"/>
<name>MITOS_HUMAN</name>
<protein>
    <recommendedName>
        <fullName evidence="21">Mitochondrial potassium channel ATP-binding subunit</fullName>
    </recommendedName>
    <alternativeName>
        <fullName evidence="17">ATP-binding cassette sub-family B member 8, mitochondrial</fullName>
        <shortName evidence="17">ABCB8</shortName>
    </alternativeName>
    <alternativeName>
        <fullName evidence="19">Mitochondrial ATP-binding cassette 1</fullName>
        <shortName evidence="19">M-ABC1</shortName>
    </alternativeName>
    <alternativeName>
        <fullName evidence="18">Mitochondrial sulfonylurea-receptor</fullName>
        <shortName evidence="18">MITOSUR</shortName>
    </alternativeName>
</protein>
<evidence type="ECO:0000250" key="1">
    <source>
        <dbReference type="UniProtKB" id="Q9CXJ4"/>
    </source>
</evidence>
<evidence type="ECO:0000255" key="2"/>
<evidence type="ECO:0000255" key="3">
    <source>
        <dbReference type="PROSITE-ProRule" id="PRU00434"/>
    </source>
</evidence>
<evidence type="ECO:0000255" key="4">
    <source>
        <dbReference type="PROSITE-ProRule" id="PRU00441"/>
    </source>
</evidence>
<evidence type="ECO:0000256" key="5">
    <source>
        <dbReference type="SAM" id="MobiDB-lite"/>
    </source>
</evidence>
<evidence type="ECO:0000269" key="6">
    <source>
    </source>
</evidence>
<evidence type="ECO:0000269" key="7">
    <source>
    </source>
</evidence>
<evidence type="ECO:0000269" key="8">
    <source>
    </source>
</evidence>
<evidence type="ECO:0000269" key="9">
    <source>
    </source>
</evidence>
<evidence type="ECO:0000269" key="10">
    <source>
    </source>
</evidence>
<evidence type="ECO:0000269" key="11">
    <source>
    </source>
</evidence>
<evidence type="ECO:0000269" key="12">
    <source>
    </source>
</evidence>
<evidence type="ECO:0000269" key="13">
    <source>
    </source>
</evidence>
<evidence type="ECO:0000269" key="14">
    <source ref="15"/>
</evidence>
<evidence type="ECO:0000303" key="15">
    <source>
    </source>
</evidence>
<evidence type="ECO:0000303" key="16">
    <source>
    </source>
</evidence>
<evidence type="ECO:0000303" key="17">
    <source>
    </source>
</evidence>
<evidence type="ECO:0000303" key="18">
    <source>
    </source>
</evidence>
<evidence type="ECO:0000303" key="19">
    <source>
    </source>
</evidence>
<evidence type="ECO:0000303" key="20">
    <source ref="3"/>
</evidence>
<evidence type="ECO:0000305" key="21"/>
<evidence type="ECO:0000305" key="22">
    <source>
    </source>
</evidence>
<evidence type="ECO:0000312" key="23">
    <source>
        <dbReference type="HGNC" id="HGNC:49"/>
    </source>
</evidence>
<evidence type="ECO:0007744" key="24">
    <source>
        <dbReference type="PDB" id="5OCH"/>
    </source>
</evidence>
<evidence type="ECO:0007829" key="25">
    <source>
        <dbReference type="PDB" id="5OCH"/>
    </source>
</evidence>
<dbReference type="EMBL" id="AF047690">
    <property type="protein sequence ID" value="AAD15748.1"/>
    <property type="molecule type" value="mRNA"/>
</dbReference>
<dbReference type="EMBL" id="AK002018">
    <property type="protein sequence ID" value="BAA92038.1"/>
    <property type="molecule type" value="mRNA"/>
</dbReference>
<dbReference type="EMBL" id="AK024401">
    <property type="protein sequence ID" value="BAG51294.1"/>
    <property type="molecule type" value="mRNA"/>
</dbReference>
<dbReference type="EMBL" id="AK222911">
    <property type="protein sequence ID" value="BAD96631.1"/>
    <property type="molecule type" value="mRNA"/>
</dbReference>
<dbReference type="EMBL" id="AK294344">
    <property type="protein sequence ID" value="BAG57613.1"/>
    <property type="molecule type" value="mRNA"/>
</dbReference>
<dbReference type="EMBL" id="AK314721">
    <property type="protein sequence ID" value="BAG37265.1"/>
    <property type="molecule type" value="mRNA"/>
</dbReference>
<dbReference type="EMBL" id="AC010973">
    <property type="status" value="NOT_ANNOTATED_CDS"/>
    <property type="molecule type" value="Genomic_DNA"/>
</dbReference>
<dbReference type="EMBL" id="CH471173">
    <property type="protein sequence ID" value="EAW54057.1"/>
    <property type="molecule type" value="Genomic_DNA"/>
</dbReference>
<dbReference type="EMBL" id="CH471173">
    <property type="protein sequence ID" value="EAW54061.1"/>
    <property type="molecule type" value="Genomic_DNA"/>
</dbReference>
<dbReference type="EMBL" id="CH471173">
    <property type="protein sequence ID" value="EAW54062.1"/>
    <property type="molecule type" value="Genomic_DNA"/>
</dbReference>
<dbReference type="EMBL" id="BC141814">
    <property type="protein sequence ID" value="AAI41815.1"/>
    <property type="molecule type" value="mRNA"/>
</dbReference>
<dbReference type="EMBL" id="BC141836">
    <property type="protein sequence ID" value="AAI41837.1"/>
    <property type="molecule type" value="mRNA"/>
</dbReference>
<dbReference type="EMBL" id="BC151235">
    <property type="protein sequence ID" value="AAI51236.1"/>
    <property type="molecule type" value="mRNA"/>
</dbReference>
<dbReference type="CCDS" id="CCDS5913.1">
    <molecule id="Q9NUT2-2"/>
</dbReference>
<dbReference type="CCDS" id="CCDS64798.1">
    <molecule id="Q9NUT2-4"/>
</dbReference>
<dbReference type="CCDS" id="CCDS64799.1">
    <molecule id="Q9NUT2-1"/>
</dbReference>
<dbReference type="CCDS" id="CCDS64800.1">
    <molecule id="Q9NUT2-3"/>
</dbReference>
<dbReference type="RefSeq" id="NP_001269220.1">
    <molecule id="Q9NUT2-1"/>
    <property type="nucleotide sequence ID" value="NM_001282291.2"/>
</dbReference>
<dbReference type="RefSeq" id="NP_001269221.1">
    <molecule id="Q9NUT2-3"/>
    <property type="nucleotide sequence ID" value="NM_001282292.2"/>
</dbReference>
<dbReference type="RefSeq" id="NP_001269222.1">
    <molecule id="Q9NUT2-4"/>
    <property type="nucleotide sequence ID" value="NM_001282293.2"/>
</dbReference>
<dbReference type="RefSeq" id="NP_009119.2">
    <molecule id="Q9NUT2-2"/>
    <property type="nucleotide sequence ID" value="NM_007188.5"/>
</dbReference>
<dbReference type="PDB" id="5OCH">
    <property type="method" value="X-ray"/>
    <property type="resolution" value="3.40 A"/>
    <property type="chains" value="A/B/C/D/E/F/G/H=110-714"/>
</dbReference>
<dbReference type="PDB" id="7EHL">
    <property type="method" value="EM"/>
    <property type="chains" value="A/B=58-735"/>
</dbReference>
<dbReference type="PDBsum" id="5OCH"/>
<dbReference type="PDBsum" id="7EHL"/>
<dbReference type="EMDB" id="EMD-31142"/>
<dbReference type="SMR" id="Q9NUT2"/>
<dbReference type="BioGRID" id="116364">
    <property type="interactions" value="67"/>
</dbReference>
<dbReference type="ComplexPortal" id="CPX-6083">
    <property type="entry name" value="MITOK-MITOSUR mitochondrial potassium channel complex"/>
</dbReference>
<dbReference type="FunCoup" id="Q9NUT2">
    <property type="interactions" value="1147"/>
</dbReference>
<dbReference type="IntAct" id="Q9NUT2">
    <property type="interactions" value="53"/>
</dbReference>
<dbReference type="MINT" id="Q9NUT2"/>
<dbReference type="STRING" id="9606.ENSP00000297504"/>
<dbReference type="DrugBank" id="DB00997">
    <property type="generic name" value="Doxorubicin"/>
</dbReference>
<dbReference type="TCDB" id="3.A.1.201.22">
    <property type="family name" value="the atp-binding cassette (abc) superfamily"/>
</dbReference>
<dbReference type="GlyGen" id="Q9NUT2">
    <property type="glycosylation" value="1 site, 1 O-linked glycan (1 site)"/>
</dbReference>
<dbReference type="iPTMnet" id="Q9NUT2"/>
<dbReference type="PhosphoSitePlus" id="Q9NUT2"/>
<dbReference type="SwissPalm" id="Q9NUT2"/>
<dbReference type="BioMuta" id="ABCB8"/>
<dbReference type="DMDM" id="143811358"/>
<dbReference type="jPOST" id="Q9NUT2"/>
<dbReference type="MassIVE" id="Q9NUT2"/>
<dbReference type="PaxDb" id="9606-ENSP00000297504"/>
<dbReference type="PeptideAtlas" id="Q9NUT2"/>
<dbReference type="ProteomicsDB" id="33804"/>
<dbReference type="ProteomicsDB" id="719"/>
<dbReference type="ProteomicsDB" id="82718">
    <molecule id="Q9NUT2-1"/>
</dbReference>
<dbReference type="ProteomicsDB" id="82719">
    <molecule id="Q9NUT2-2"/>
</dbReference>
<dbReference type="Pumba" id="Q9NUT2"/>
<dbReference type="Antibodypedia" id="32942">
    <property type="antibodies" value="187 antibodies from 28 providers"/>
</dbReference>
<dbReference type="DNASU" id="11194"/>
<dbReference type="Ensembl" id="ENST00000297504.10">
    <molecule id="Q9NUT2-1"/>
    <property type="protein sequence ID" value="ENSP00000297504.6"/>
    <property type="gene ID" value="ENSG00000197150.13"/>
</dbReference>
<dbReference type="Ensembl" id="ENST00000358849.9">
    <molecule id="Q9NUT2-2"/>
    <property type="protein sequence ID" value="ENSP00000351717.4"/>
    <property type="gene ID" value="ENSG00000197150.13"/>
</dbReference>
<dbReference type="Ensembl" id="ENST00000498578.5">
    <molecule id="Q9NUT2-3"/>
    <property type="protein sequence ID" value="ENSP00000418271.1"/>
    <property type="gene ID" value="ENSG00000197150.13"/>
</dbReference>
<dbReference type="Ensembl" id="ENST00000542328.5">
    <molecule id="Q9NUT2-4"/>
    <property type="protein sequence ID" value="ENSP00000438776.1"/>
    <property type="gene ID" value="ENSG00000197150.13"/>
</dbReference>
<dbReference type="GeneID" id="11194"/>
<dbReference type="KEGG" id="hsa:11194"/>
<dbReference type="MANE-Select" id="ENST00000358849.9">
    <molecule id="Q9NUT2-2"/>
    <property type="protein sequence ID" value="ENSP00000351717.4"/>
    <property type="RefSeq nucleotide sequence ID" value="NM_007188.5"/>
    <property type="RefSeq protein sequence ID" value="NP_009119.2"/>
</dbReference>
<dbReference type="UCSC" id="uc003wik.6">
    <molecule id="Q9NUT2-1"/>
    <property type="organism name" value="human"/>
</dbReference>
<dbReference type="AGR" id="HGNC:49"/>
<dbReference type="CTD" id="11194"/>
<dbReference type="DisGeNET" id="11194"/>
<dbReference type="GeneCards" id="ABCB8"/>
<dbReference type="HGNC" id="HGNC:49">
    <property type="gene designation" value="ABCB8"/>
</dbReference>
<dbReference type="HPA" id="ENSG00000197150">
    <property type="expression patterns" value="Low tissue specificity"/>
</dbReference>
<dbReference type="MIM" id="605464">
    <property type="type" value="gene"/>
</dbReference>
<dbReference type="neXtProt" id="NX_Q9NUT2"/>
<dbReference type="OpenTargets" id="ENSG00000197150"/>
<dbReference type="PharmGKB" id="PA24390"/>
<dbReference type="VEuPathDB" id="HostDB:ENSG00000197150"/>
<dbReference type="eggNOG" id="KOG0058">
    <property type="taxonomic scope" value="Eukaryota"/>
</dbReference>
<dbReference type="GeneTree" id="ENSGT00940000159126"/>
<dbReference type="HOGENOM" id="CLU_000604_84_3_1"/>
<dbReference type="InParanoid" id="Q9NUT2"/>
<dbReference type="OMA" id="MTWLGER"/>
<dbReference type="OrthoDB" id="6500128at2759"/>
<dbReference type="PAN-GO" id="Q9NUT2">
    <property type="GO annotations" value="3 GO annotations based on evolutionary models"/>
</dbReference>
<dbReference type="PhylomeDB" id="Q9NUT2"/>
<dbReference type="TreeFam" id="TF105196"/>
<dbReference type="BRENDA" id="7.4.2.5">
    <property type="organism ID" value="2681"/>
</dbReference>
<dbReference type="PathwayCommons" id="Q9NUT2"/>
<dbReference type="Reactome" id="R-HSA-1369007">
    <property type="pathway name" value="Mitochondrial ABC transporters"/>
</dbReference>
<dbReference type="SignaLink" id="Q9NUT2"/>
<dbReference type="BioGRID-ORCS" id="11194">
    <property type="hits" value="13 hits in 1163 CRISPR screens"/>
</dbReference>
<dbReference type="CD-CODE" id="FB4E32DD">
    <property type="entry name" value="Presynaptic clusters and postsynaptic densities"/>
</dbReference>
<dbReference type="ChiTaRS" id="ABCB8">
    <property type="organism name" value="human"/>
</dbReference>
<dbReference type="GeneWiki" id="ABCB8"/>
<dbReference type="GenomeRNAi" id="11194"/>
<dbReference type="Pharos" id="Q9NUT2">
    <property type="development level" value="Tbio"/>
</dbReference>
<dbReference type="PRO" id="PR:Q9NUT2"/>
<dbReference type="Proteomes" id="UP000005640">
    <property type="component" value="Chromosome 7"/>
</dbReference>
<dbReference type="RNAct" id="Q9NUT2">
    <property type="molecule type" value="protein"/>
</dbReference>
<dbReference type="Bgee" id="ENSG00000197150">
    <property type="expression patterns" value="Expressed in pancreatic ductal cell and 127 other cell types or tissues"/>
</dbReference>
<dbReference type="ExpressionAtlas" id="Q9NUT2">
    <property type="expression patterns" value="baseline and differential"/>
</dbReference>
<dbReference type="GO" id="GO:0043190">
    <property type="term" value="C:ATP-binding cassette (ABC) transporter complex"/>
    <property type="evidence" value="ECO:0000304"/>
    <property type="project" value="ProtInc"/>
</dbReference>
<dbReference type="GO" id="GO:0016020">
    <property type="term" value="C:membrane"/>
    <property type="evidence" value="ECO:0000318"/>
    <property type="project" value="GO_Central"/>
</dbReference>
<dbReference type="GO" id="GO:0062157">
    <property type="term" value="C:mitochondrial ATP-gated potassium channel complex"/>
    <property type="evidence" value="ECO:0000314"/>
    <property type="project" value="UniProtKB"/>
</dbReference>
<dbReference type="GO" id="GO:0005743">
    <property type="term" value="C:mitochondrial inner membrane"/>
    <property type="evidence" value="ECO:0000314"/>
    <property type="project" value="ComplexPortal"/>
</dbReference>
<dbReference type="GO" id="GO:0031966">
    <property type="term" value="C:mitochondrial membrane"/>
    <property type="evidence" value="ECO:0000314"/>
    <property type="project" value="GO_Central"/>
</dbReference>
<dbReference type="GO" id="GO:0005739">
    <property type="term" value="C:mitochondrion"/>
    <property type="evidence" value="ECO:0000314"/>
    <property type="project" value="HPA"/>
</dbReference>
<dbReference type="GO" id="GO:0005730">
    <property type="term" value="C:nucleolus"/>
    <property type="evidence" value="ECO:0000314"/>
    <property type="project" value="HPA"/>
</dbReference>
<dbReference type="GO" id="GO:0005654">
    <property type="term" value="C:nucleoplasm"/>
    <property type="evidence" value="ECO:0000314"/>
    <property type="project" value="HPA"/>
</dbReference>
<dbReference type="GO" id="GO:0140359">
    <property type="term" value="F:ABC-type transporter activity"/>
    <property type="evidence" value="ECO:0007669"/>
    <property type="project" value="InterPro"/>
</dbReference>
<dbReference type="GO" id="GO:0005524">
    <property type="term" value="F:ATP binding"/>
    <property type="evidence" value="ECO:0000314"/>
    <property type="project" value="UniProtKB"/>
</dbReference>
<dbReference type="GO" id="GO:0016887">
    <property type="term" value="F:ATP hydrolysis activity"/>
    <property type="evidence" value="ECO:0007669"/>
    <property type="project" value="InterPro"/>
</dbReference>
<dbReference type="GO" id="GO:0042626">
    <property type="term" value="F:ATPase-coupled transmembrane transporter activity"/>
    <property type="evidence" value="ECO:0000318"/>
    <property type="project" value="GO_Central"/>
</dbReference>
<dbReference type="GO" id="GO:0006884">
    <property type="term" value="P:cell volume homeostasis"/>
    <property type="evidence" value="ECO:0000314"/>
    <property type="project" value="ComplexPortal"/>
</dbReference>
<dbReference type="GO" id="GO:0140141">
    <property type="term" value="P:mitochondrial potassium ion transmembrane transport"/>
    <property type="evidence" value="ECO:0000314"/>
    <property type="project" value="ComplexPortal"/>
</dbReference>
<dbReference type="GO" id="GO:0071805">
    <property type="term" value="P:potassium ion transmembrane transport"/>
    <property type="evidence" value="ECO:0000314"/>
    <property type="project" value="UniProtKB"/>
</dbReference>
<dbReference type="GO" id="GO:0055085">
    <property type="term" value="P:transmembrane transport"/>
    <property type="evidence" value="ECO:0000318"/>
    <property type="project" value="GO_Central"/>
</dbReference>
<dbReference type="CDD" id="cd18574">
    <property type="entry name" value="ABC_6TM_ABCB8_like"/>
    <property type="match status" value="1"/>
</dbReference>
<dbReference type="CDD" id="cd03249">
    <property type="entry name" value="ABC_MTABC3_MDL1_MDL2"/>
    <property type="match status" value="1"/>
</dbReference>
<dbReference type="FunFam" id="1.20.1560.10:FF:000073">
    <property type="entry name" value="ATP binding cassette subfamily B member 8"/>
    <property type="match status" value="1"/>
</dbReference>
<dbReference type="FunFam" id="3.40.50.300:FF:000403">
    <property type="entry name" value="ATP-binding cassette sub-family B member 8, mitochondrial"/>
    <property type="match status" value="1"/>
</dbReference>
<dbReference type="Gene3D" id="1.20.1560.10">
    <property type="entry name" value="ABC transporter type 1, transmembrane domain"/>
    <property type="match status" value="1"/>
</dbReference>
<dbReference type="Gene3D" id="3.40.50.300">
    <property type="entry name" value="P-loop containing nucleotide triphosphate hydrolases"/>
    <property type="match status" value="1"/>
</dbReference>
<dbReference type="InterPro" id="IPR003593">
    <property type="entry name" value="AAA+_ATPase"/>
</dbReference>
<dbReference type="InterPro" id="IPR011527">
    <property type="entry name" value="ABC1_TM_dom"/>
</dbReference>
<dbReference type="InterPro" id="IPR036640">
    <property type="entry name" value="ABC1_TM_sf"/>
</dbReference>
<dbReference type="InterPro" id="IPR003439">
    <property type="entry name" value="ABC_transporter-like_ATP-bd"/>
</dbReference>
<dbReference type="InterPro" id="IPR017871">
    <property type="entry name" value="ABC_transporter-like_CS"/>
</dbReference>
<dbReference type="InterPro" id="IPR027417">
    <property type="entry name" value="P-loop_NTPase"/>
</dbReference>
<dbReference type="InterPro" id="IPR039421">
    <property type="entry name" value="Type_1_exporter"/>
</dbReference>
<dbReference type="PANTHER" id="PTHR43394">
    <property type="entry name" value="ATP-DEPENDENT PERMEASE MDL1, MITOCHONDRIAL"/>
    <property type="match status" value="1"/>
</dbReference>
<dbReference type="PANTHER" id="PTHR43394:SF17">
    <property type="entry name" value="MITOCHONDRIAL POTASSIUM CHANNEL ATP-BINDING SUBUNIT"/>
    <property type="match status" value="1"/>
</dbReference>
<dbReference type="Pfam" id="PF00664">
    <property type="entry name" value="ABC_membrane"/>
    <property type="match status" value="1"/>
</dbReference>
<dbReference type="Pfam" id="PF00005">
    <property type="entry name" value="ABC_tran"/>
    <property type="match status" value="1"/>
</dbReference>
<dbReference type="PIRSF" id="PIRSF002773">
    <property type="entry name" value="ABC_prm/ATPase_B"/>
    <property type="match status" value="1"/>
</dbReference>
<dbReference type="SMART" id="SM00382">
    <property type="entry name" value="AAA"/>
    <property type="match status" value="1"/>
</dbReference>
<dbReference type="SUPFAM" id="SSF90123">
    <property type="entry name" value="ABC transporter transmembrane region"/>
    <property type="match status" value="1"/>
</dbReference>
<dbReference type="SUPFAM" id="SSF52540">
    <property type="entry name" value="P-loop containing nucleoside triphosphate hydrolases"/>
    <property type="match status" value="1"/>
</dbReference>
<dbReference type="PROSITE" id="PS50929">
    <property type="entry name" value="ABC_TM1F"/>
    <property type="match status" value="1"/>
</dbReference>
<dbReference type="PROSITE" id="PS00211">
    <property type="entry name" value="ABC_TRANSPORTER_1"/>
    <property type="match status" value="1"/>
</dbReference>
<dbReference type="PROSITE" id="PS50893">
    <property type="entry name" value="ABC_TRANSPORTER_2"/>
    <property type="match status" value="1"/>
</dbReference>